<feature type="chain" id="PRO_0000073352" description="ATP synthase gamma chain">
    <location>
        <begin position="1"/>
        <end position="291"/>
    </location>
</feature>
<comment type="function">
    <text evidence="1">Produces ATP from ADP in the presence of a proton gradient across the membrane. The gamma chain is believed to be important in regulating ATPase activity and the flow of protons through the CF(0) complex.</text>
</comment>
<comment type="subunit">
    <text evidence="1">F-type ATPases have 2 components, CF(1) - the catalytic core - and CF(0) - the membrane proton channel. CF(1) has five subunits: alpha(3), beta(3), gamma(1), delta(1), epsilon(1). CF(0) has three main subunits: a, b and c.</text>
</comment>
<comment type="subcellular location">
    <subcellularLocation>
        <location evidence="1">Cell inner membrane</location>
        <topology evidence="1">Peripheral membrane protein</topology>
    </subcellularLocation>
</comment>
<comment type="similarity">
    <text evidence="1">Belongs to the ATPase gamma chain family.</text>
</comment>
<sequence>MAGTKEIRTKIKSVQNTRKITKAMEMVAASKMRKAQERMRNARPYAEKVRNIAAHLASANPEFKHPFMQEREVKRVGMIVVTTDKGLCGGLNTNVLRAVTNELKTLQGRGVDVQATAIGGKGMQFLSRIGAKVVSNVVQLGDTPHLEKLIGAIKVQLDAFTNGEVDAVYLSYTRFINTMKQEPMVEQLLPLAADKLAQTEEEKRAYSWDYIYEPDAQTVVEDLLVRYVEALVYQAVAENMASEQSARMVAMKAASDNAKNVIGELQLDYNKTRQAAITKELSEIVSGAAAV</sequence>
<evidence type="ECO:0000255" key="1">
    <source>
        <dbReference type="HAMAP-Rule" id="MF_00815"/>
    </source>
</evidence>
<reference key="1">
    <citation type="journal article" date="2010" name="PLoS ONE">
        <title>The complete multipartite genome sequence of Cupriavidus necator JMP134, a versatile pollutant degrader.</title>
        <authorList>
            <person name="Lykidis A."/>
            <person name="Perez-Pantoja D."/>
            <person name="Ledger T."/>
            <person name="Mavromatis K."/>
            <person name="Anderson I.J."/>
            <person name="Ivanova N.N."/>
            <person name="Hooper S.D."/>
            <person name="Lapidus A."/>
            <person name="Lucas S."/>
            <person name="Gonzalez B."/>
            <person name="Kyrpides N.C."/>
        </authorList>
    </citation>
    <scope>NUCLEOTIDE SEQUENCE [LARGE SCALE GENOMIC DNA]</scope>
    <source>
        <strain>JMP134 / LMG 1197</strain>
    </source>
</reference>
<dbReference type="EMBL" id="CP000090">
    <property type="protein sequence ID" value="AAZ62705.1"/>
    <property type="molecule type" value="Genomic_DNA"/>
</dbReference>
<dbReference type="SMR" id="Q46VX9"/>
<dbReference type="STRING" id="264198.Reut_A3347"/>
<dbReference type="KEGG" id="reu:Reut_A3347"/>
<dbReference type="eggNOG" id="COG0224">
    <property type="taxonomic scope" value="Bacteria"/>
</dbReference>
<dbReference type="HOGENOM" id="CLU_050669_0_1_4"/>
<dbReference type="OrthoDB" id="9812769at2"/>
<dbReference type="GO" id="GO:0005886">
    <property type="term" value="C:plasma membrane"/>
    <property type="evidence" value="ECO:0007669"/>
    <property type="project" value="UniProtKB-SubCell"/>
</dbReference>
<dbReference type="GO" id="GO:0045259">
    <property type="term" value="C:proton-transporting ATP synthase complex"/>
    <property type="evidence" value="ECO:0007669"/>
    <property type="project" value="UniProtKB-KW"/>
</dbReference>
<dbReference type="GO" id="GO:0005524">
    <property type="term" value="F:ATP binding"/>
    <property type="evidence" value="ECO:0007669"/>
    <property type="project" value="UniProtKB-UniRule"/>
</dbReference>
<dbReference type="GO" id="GO:0046933">
    <property type="term" value="F:proton-transporting ATP synthase activity, rotational mechanism"/>
    <property type="evidence" value="ECO:0007669"/>
    <property type="project" value="UniProtKB-UniRule"/>
</dbReference>
<dbReference type="GO" id="GO:0042777">
    <property type="term" value="P:proton motive force-driven plasma membrane ATP synthesis"/>
    <property type="evidence" value="ECO:0007669"/>
    <property type="project" value="UniProtKB-UniRule"/>
</dbReference>
<dbReference type="CDD" id="cd12151">
    <property type="entry name" value="F1-ATPase_gamma"/>
    <property type="match status" value="1"/>
</dbReference>
<dbReference type="FunFam" id="1.10.287.80:FF:000005">
    <property type="entry name" value="ATP synthase gamma chain"/>
    <property type="match status" value="1"/>
</dbReference>
<dbReference type="Gene3D" id="3.40.1380.10">
    <property type="match status" value="1"/>
</dbReference>
<dbReference type="Gene3D" id="1.10.287.80">
    <property type="entry name" value="ATP synthase, gamma subunit, helix hairpin domain"/>
    <property type="match status" value="1"/>
</dbReference>
<dbReference type="HAMAP" id="MF_00815">
    <property type="entry name" value="ATP_synth_gamma_bact"/>
    <property type="match status" value="1"/>
</dbReference>
<dbReference type="InterPro" id="IPR035968">
    <property type="entry name" value="ATP_synth_F1_ATPase_gsu"/>
</dbReference>
<dbReference type="InterPro" id="IPR000131">
    <property type="entry name" value="ATP_synth_F1_gsu"/>
</dbReference>
<dbReference type="InterPro" id="IPR023632">
    <property type="entry name" value="ATP_synth_F1_gsu_CS"/>
</dbReference>
<dbReference type="NCBIfam" id="TIGR01146">
    <property type="entry name" value="ATPsyn_F1gamma"/>
    <property type="match status" value="1"/>
</dbReference>
<dbReference type="NCBIfam" id="NF004144">
    <property type="entry name" value="PRK05621.1-1"/>
    <property type="match status" value="1"/>
</dbReference>
<dbReference type="PANTHER" id="PTHR11693">
    <property type="entry name" value="ATP SYNTHASE GAMMA CHAIN"/>
    <property type="match status" value="1"/>
</dbReference>
<dbReference type="PANTHER" id="PTHR11693:SF22">
    <property type="entry name" value="ATP SYNTHASE SUBUNIT GAMMA, MITOCHONDRIAL"/>
    <property type="match status" value="1"/>
</dbReference>
<dbReference type="Pfam" id="PF00231">
    <property type="entry name" value="ATP-synt"/>
    <property type="match status" value="1"/>
</dbReference>
<dbReference type="PRINTS" id="PR00126">
    <property type="entry name" value="ATPASEGAMMA"/>
</dbReference>
<dbReference type="SUPFAM" id="SSF52943">
    <property type="entry name" value="ATP synthase (F1-ATPase), gamma subunit"/>
    <property type="match status" value="1"/>
</dbReference>
<dbReference type="PROSITE" id="PS00153">
    <property type="entry name" value="ATPASE_GAMMA"/>
    <property type="match status" value="1"/>
</dbReference>
<gene>
    <name evidence="1" type="primary">atpG</name>
    <name type="ordered locus">Reut_A3347</name>
</gene>
<keyword id="KW-0066">ATP synthesis</keyword>
<keyword id="KW-0997">Cell inner membrane</keyword>
<keyword id="KW-1003">Cell membrane</keyword>
<keyword id="KW-0139">CF(1)</keyword>
<keyword id="KW-0375">Hydrogen ion transport</keyword>
<keyword id="KW-0406">Ion transport</keyword>
<keyword id="KW-0472">Membrane</keyword>
<keyword id="KW-0813">Transport</keyword>
<protein>
    <recommendedName>
        <fullName evidence="1">ATP synthase gamma chain</fullName>
    </recommendedName>
    <alternativeName>
        <fullName evidence="1">ATP synthase F1 sector gamma subunit</fullName>
    </alternativeName>
    <alternativeName>
        <fullName evidence="1">F-ATPase gamma subunit</fullName>
    </alternativeName>
</protein>
<name>ATPG_CUPPJ</name>
<proteinExistence type="inferred from homology"/>
<organism>
    <name type="scientific">Cupriavidus pinatubonensis (strain JMP 134 / LMG 1197)</name>
    <name type="common">Cupriavidus necator (strain JMP 134)</name>
    <dbReference type="NCBI Taxonomy" id="264198"/>
    <lineage>
        <taxon>Bacteria</taxon>
        <taxon>Pseudomonadati</taxon>
        <taxon>Pseudomonadota</taxon>
        <taxon>Betaproteobacteria</taxon>
        <taxon>Burkholderiales</taxon>
        <taxon>Burkholderiaceae</taxon>
        <taxon>Cupriavidus</taxon>
    </lineage>
</organism>
<accession>Q46VX9</accession>